<feature type="chain" id="PRO_0000078350" description="Heat shock cognate 70 kDa protein 1">
    <location>
        <begin position="1"/>
        <end position="650"/>
    </location>
</feature>
<feature type="region of interest" description="Disordered" evidence="1">
    <location>
        <begin position="621"/>
        <end position="650"/>
    </location>
</feature>
<protein>
    <recommendedName>
        <fullName>Heat shock cognate 70 kDa protein 1</fullName>
    </recommendedName>
</protein>
<comment type="similarity">
    <text evidence="2">Belongs to the heat shock protein 70 family.</text>
</comment>
<keyword id="KW-0067">ATP-binding</keyword>
<keyword id="KW-0547">Nucleotide-binding</keyword>
<keyword id="KW-1185">Reference proteome</keyword>
<keyword id="KW-0346">Stress response</keyword>
<proteinExistence type="evidence at transcript level"/>
<dbReference type="EMBL" id="X54029">
    <property type="protein sequence ID" value="CAA37970.1"/>
    <property type="molecule type" value="mRNA"/>
</dbReference>
<dbReference type="PIR" id="S14949">
    <property type="entry name" value="S14949"/>
</dbReference>
<dbReference type="SMR" id="P24629"/>
<dbReference type="FunCoup" id="P24629">
    <property type="interactions" value="1600"/>
</dbReference>
<dbReference type="STRING" id="4081.P24629"/>
<dbReference type="PaxDb" id="4081-Solyc06g076020.2.1"/>
<dbReference type="eggNOG" id="KOG0101">
    <property type="taxonomic scope" value="Eukaryota"/>
</dbReference>
<dbReference type="InParanoid" id="P24629"/>
<dbReference type="Proteomes" id="UP000004994">
    <property type="component" value="Unplaced"/>
</dbReference>
<dbReference type="ExpressionAtlas" id="P24629">
    <property type="expression patterns" value="baseline and differential"/>
</dbReference>
<dbReference type="GO" id="GO:0005737">
    <property type="term" value="C:cytoplasm"/>
    <property type="evidence" value="ECO:0000318"/>
    <property type="project" value="GO_Central"/>
</dbReference>
<dbReference type="GO" id="GO:0005524">
    <property type="term" value="F:ATP binding"/>
    <property type="evidence" value="ECO:0007669"/>
    <property type="project" value="UniProtKB-KW"/>
</dbReference>
<dbReference type="GO" id="GO:0016887">
    <property type="term" value="F:ATP hydrolysis activity"/>
    <property type="evidence" value="ECO:0000318"/>
    <property type="project" value="GO_Central"/>
</dbReference>
<dbReference type="GO" id="GO:0140662">
    <property type="term" value="F:ATP-dependent protein folding chaperone"/>
    <property type="evidence" value="ECO:0007669"/>
    <property type="project" value="InterPro"/>
</dbReference>
<dbReference type="GO" id="GO:0031072">
    <property type="term" value="F:heat shock protein binding"/>
    <property type="evidence" value="ECO:0000318"/>
    <property type="project" value="GO_Central"/>
</dbReference>
<dbReference type="GO" id="GO:0044183">
    <property type="term" value="F:protein folding chaperone"/>
    <property type="evidence" value="ECO:0000318"/>
    <property type="project" value="GO_Central"/>
</dbReference>
<dbReference type="GO" id="GO:0051085">
    <property type="term" value="P:chaperone cofactor-dependent protein refolding"/>
    <property type="evidence" value="ECO:0000318"/>
    <property type="project" value="GO_Central"/>
</dbReference>
<dbReference type="GO" id="GO:0042026">
    <property type="term" value="P:protein refolding"/>
    <property type="evidence" value="ECO:0000318"/>
    <property type="project" value="GO_Central"/>
</dbReference>
<dbReference type="CDD" id="cd10233">
    <property type="entry name" value="ASKHA_NBD_HSP70_HSPA1"/>
    <property type="match status" value="1"/>
</dbReference>
<dbReference type="FunFam" id="2.60.34.10:FF:000002">
    <property type="entry name" value="Heat shock 70 kDa"/>
    <property type="match status" value="1"/>
</dbReference>
<dbReference type="FunFam" id="3.90.640.10:FF:000002">
    <property type="entry name" value="Heat shock 70 kDa"/>
    <property type="match status" value="1"/>
</dbReference>
<dbReference type="FunFam" id="1.20.1270.10:FF:000028">
    <property type="entry name" value="Heat shock 70 kDa protein"/>
    <property type="match status" value="1"/>
</dbReference>
<dbReference type="FunFam" id="3.30.30.30:FF:000019">
    <property type="entry name" value="Heat shock 70 kDa protein"/>
    <property type="match status" value="1"/>
</dbReference>
<dbReference type="FunFam" id="3.30.420.40:FF:000172">
    <property type="entry name" value="Heat shock 70 kDa protein"/>
    <property type="match status" value="1"/>
</dbReference>
<dbReference type="FunFam" id="3.30.420.40:FF:000465">
    <property type="entry name" value="Heat shock cognate 70 kDa protein 2"/>
    <property type="match status" value="1"/>
</dbReference>
<dbReference type="FunFam" id="3.30.420.40:FF:000026">
    <property type="entry name" value="Heat shock protein 70"/>
    <property type="match status" value="1"/>
</dbReference>
<dbReference type="Gene3D" id="1.20.1270.10">
    <property type="match status" value="1"/>
</dbReference>
<dbReference type="Gene3D" id="3.30.30.30">
    <property type="match status" value="1"/>
</dbReference>
<dbReference type="Gene3D" id="3.30.420.40">
    <property type="match status" value="2"/>
</dbReference>
<dbReference type="Gene3D" id="3.90.640.10">
    <property type="entry name" value="Actin, Chain A, domain 4"/>
    <property type="match status" value="1"/>
</dbReference>
<dbReference type="Gene3D" id="2.60.34.10">
    <property type="entry name" value="Substrate Binding Domain Of DNAk, Chain A, domain 1"/>
    <property type="match status" value="1"/>
</dbReference>
<dbReference type="InterPro" id="IPR043129">
    <property type="entry name" value="ATPase_NBD"/>
</dbReference>
<dbReference type="InterPro" id="IPR018181">
    <property type="entry name" value="Heat_shock_70_CS"/>
</dbReference>
<dbReference type="InterPro" id="IPR029048">
    <property type="entry name" value="HSP70_C_sf"/>
</dbReference>
<dbReference type="InterPro" id="IPR029047">
    <property type="entry name" value="HSP70_peptide-bd_sf"/>
</dbReference>
<dbReference type="InterPro" id="IPR013126">
    <property type="entry name" value="Hsp_70_fam"/>
</dbReference>
<dbReference type="NCBIfam" id="NF001413">
    <property type="entry name" value="PRK00290.1"/>
    <property type="match status" value="1"/>
</dbReference>
<dbReference type="PANTHER" id="PTHR19375">
    <property type="entry name" value="HEAT SHOCK PROTEIN 70KDA"/>
    <property type="match status" value="1"/>
</dbReference>
<dbReference type="Pfam" id="PF00012">
    <property type="entry name" value="HSP70"/>
    <property type="match status" value="1"/>
</dbReference>
<dbReference type="PRINTS" id="PR00301">
    <property type="entry name" value="HEATSHOCK70"/>
</dbReference>
<dbReference type="SUPFAM" id="SSF53067">
    <property type="entry name" value="Actin-like ATPase domain"/>
    <property type="match status" value="2"/>
</dbReference>
<dbReference type="SUPFAM" id="SSF100934">
    <property type="entry name" value="Heat shock protein 70kD (HSP70), C-terminal subdomain"/>
    <property type="match status" value="1"/>
</dbReference>
<dbReference type="SUPFAM" id="SSF100920">
    <property type="entry name" value="Heat shock protein 70kD (HSP70), peptide-binding domain"/>
    <property type="match status" value="1"/>
</dbReference>
<dbReference type="PROSITE" id="PS00297">
    <property type="entry name" value="HSP70_1"/>
    <property type="match status" value="1"/>
</dbReference>
<dbReference type="PROSITE" id="PS00329">
    <property type="entry name" value="HSP70_2"/>
    <property type="match status" value="1"/>
</dbReference>
<dbReference type="PROSITE" id="PS01036">
    <property type="entry name" value="HSP70_3"/>
    <property type="match status" value="1"/>
</dbReference>
<evidence type="ECO:0000256" key="1">
    <source>
        <dbReference type="SAM" id="MobiDB-lite"/>
    </source>
</evidence>
<evidence type="ECO:0000305" key="2"/>
<name>HSP71_SOLLC</name>
<organism>
    <name type="scientific">Solanum lycopersicum</name>
    <name type="common">Tomato</name>
    <name type="synonym">Lycopersicon esculentum</name>
    <dbReference type="NCBI Taxonomy" id="4081"/>
    <lineage>
        <taxon>Eukaryota</taxon>
        <taxon>Viridiplantae</taxon>
        <taxon>Streptophyta</taxon>
        <taxon>Embryophyta</taxon>
        <taxon>Tracheophyta</taxon>
        <taxon>Spermatophyta</taxon>
        <taxon>Magnoliopsida</taxon>
        <taxon>eudicotyledons</taxon>
        <taxon>Gunneridae</taxon>
        <taxon>Pentapetalae</taxon>
        <taxon>asterids</taxon>
        <taxon>lamiids</taxon>
        <taxon>Solanales</taxon>
        <taxon>Solanaceae</taxon>
        <taxon>Solanoideae</taxon>
        <taxon>Solaneae</taxon>
        <taxon>Solanum</taxon>
        <taxon>Solanum subgen. Lycopersicon</taxon>
    </lineage>
</organism>
<sequence length="650" mass="71287">MAGKGEGPAIGIDLGTTYSCVGVWQHDRVEIIANDQGNRTTPSYVGFTDTERLIGDAAKNQVALNPINTVFDAKRLIGRRFSDASVQEDMKLWPFKVIPGPGDKPMIVVTYKGEEKEFAAEEISSMVLTKMKEIAEAFLGSTVKNAVVTVPAYFNDSQRQATKDAGVISGLNVMRIINEPTAAAIAYGLDKKATSAGEKNVLIFDLGGGTFDVSLLTIEEGIFEVKATAGDTHLGGEDFDNRMVNHFVHEFKRKHKKDITGNPRALRRLRTACERAKRTLSSTAQTTIEIDSLYEGVDFYSTITRARFEELNMDLFRKCMEPVEKCLRDAKMDKSTVHDVVLVGGSTRIPKVQQVAMTNFFNGKELCKSINPDEAVAYGAAVQAAILSGEGNEKVQDLLLLDVTPLSLGLETAGGVMTVLIPRNTTIPTKKEQVFSTYSDNQPGVLIQVFEGERRARTRDNNLLGKFELSVIPPAPRVVPQITVCFDIDANGILNVSAEDKTTGQKNKITITNDKGRLSKEEIEKMVQEAEKYKAEDEELKKKVEAKNSLENYAYNMRNTVKDEKIGSKLSSDDKKKIEDAVDQAISWLESNQLAEVDEFEDKMKELEGICNPIIAKMYQGAGGDAGVPMDDDAPPSGGSSAGPKIEEVD</sequence>
<accession>P24629</accession>
<reference key="1">
    <citation type="journal article" date="1991" name="Plant Mol. Biol.">
        <title>Sequences of two hsc 70 cDNAs from Lycopersicon esculentum.</title>
        <authorList>
            <person name="Lin T.Y."/>
            <person name="Duck N.B."/>
            <person name="Winter J."/>
            <person name="Folk W.R."/>
        </authorList>
    </citation>
    <scope>NUCLEOTIDE SEQUENCE [MRNA]</scope>
    <source>
        <strain>cv. VF36</strain>
        <tissue>Pistil</tissue>
    </source>
</reference>
<gene>
    <name type="primary">HSC-I</name>
</gene>